<proteinExistence type="inferred from homology"/>
<accession>B4T7Z6</accession>
<feature type="chain" id="PRO_1000090559" description="Crossover junction endodeoxyribonuclease RuvC">
    <location>
        <begin position="1"/>
        <end position="173"/>
    </location>
</feature>
<feature type="active site" evidence="1">
    <location>
        <position position="8"/>
    </location>
</feature>
<feature type="active site" evidence="1">
    <location>
        <position position="67"/>
    </location>
</feature>
<feature type="active site" evidence="1">
    <location>
        <position position="139"/>
    </location>
</feature>
<feature type="binding site" evidence="1">
    <location>
        <position position="8"/>
    </location>
    <ligand>
        <name>Mg(2+)</name>
        <dbReference type="ChEBI" id="CHEBI:18420"/>
        <label>1</label>
    </ligand>
</feature>
<feature type="binding site" evidence="1">
    <location>
        <position position="67"/>
    </location>
    <ligand>
        <name>Mg(2+)</name>
        <dbReference type="ChEBI" id="CHEBI:18420"/>
        <label>2</label>
    </ligand>
</feature>
<feature type="binding site" evidence="1">
    <location>
        <position position="139"/>
    </location>
    <ligand>
        <name>Mg(2+)</name>
        <dbReference type="ChEBI" id="CHEBI:18420"/>
        <label>1</label>
    </ligand>
</feature>
<comment type="function">
    <text evidence="1">The RuvA-RuvB-RuvC complex processes Holliday junction (HJ) DNA during genetic recombination and DNA repair. Endonuclease that resolves HJ intermediates. Cleaves cruciform DNA by making single-stranded nicks across the HJ at symmetrical positions within the homologous arms, yielding a 5'-phosphate and a 3'-hydroxyl group; requires a central core of homology in the junction. The consensus cleavage sequence is 5'-(A/T)TT(C/G)-3'. Cleavage occurs on the 3'-side of the TT dinucleotide at the point of strand exchange. HJ branch migration catalyzed by RuvA-RuvB allows RuvC to scan DNA until it finds its consensus sequence, where it cleaves and resolves the cruciform DNA.</text>
</comment>
<comment type="catalytic activity">
    <reaction evidence="1">
        <text>Endonucleolytic cleavage at a junction such as a reciprocal single-stranded crossover between two homologous DNA duplexes (Holliday junction).</text>
        <dbReference type="EC" id="3.1.21.10"/>
    </reaction>
</comment>
<comment type="cofactor">
    <cofactor evidence="1">
        <name>Mg(2+)</name>
        <dbReference type="ChEBI" id="CHEBI:18420"/>
    </cofactor>
    <text evidence="1">Binds 2 Mg(2+) ion per subunit.</text>
</comment>
<comment type="subunit">
    <text evidence="1">Homodimer which binds Holliday junction (HJ) DNA. The HJ becomes 2-fold symmetrical on binding to RuvC with unstacked arms; it has a different conformation from HJ DNA in complex with RuvA. In the full resolvosome a probable DNA-RuvA(4)-RuvB(12)-RuvC(2) complex forms which resolves the HJ.</text>
</comment>
<comment type="subcellular location">
    <subcellularLocation>
        <location evidence="1">Cytoplasm</location>
    </subcellularLocation>
</comment>
<comment type="similarity">
    <text evidence="1">Belongs to the RuvC family.</text>
</comment>
<sequence>MSIILGIDPGSRITGYGVIRQVGRQLTYLGSGCIRTKVDDLPSRLKLIYAGVTEIITQFQPDYFAIEQVFMAKNADSALKLGQARGVAIVAAVNQELPVFEYAARQVKQTVVGIGSAEKSQVQHMVRTLLKLPANPQADAADALAIAITHCHVSQNAMQMSESRLNLARGRLR</sequence>
<dbReference type="EC" id="3.1.21.10" evidence="1"/>
<dbReference type="EMBL" id="CP001120">
    <property type="protein sequence ID" value="ACF67035.1"/>
    <property type="molecule type" value="Genomic_DNA"/>
</dbReference>
<dbReference type="RefSeq" id="WP_000022509.1">
    <property type="nucleotide sequence ID" value="NC_011083.1"/>
</dbReference>
<dbReference type="SMR" id="B4T7Z6"/>
<dbReference type="GeneID" id="93033412"/>
<dbReference type="KEGG" id="seh:SeHA_C2112"/>
<dbReference type="HOGENOM" id="CLU_091257_2_1_6"/>
<dbReference type="Proteomes" id="UP000001866">
    <property type="component" value="Chromosome"/>
</dbReference>
<dbReference type="GO" id="GO:0005737">
    <property type="term" value="C:cytoplasm"/>
    <property type="evidence" value="ECO:0007669"/>
    <property type="project" value="UniProtKB-SubCell"/>
</dbReference>
<dbReference type="GO" id="GO:0048476">
    <property type="term" value="C:Holliday junction resolvase complex"/>
    <property type="evidence" value="ECO:0007669"/>
    <property type="project" value="UniProtKB-UniRule"/>
</dbReference>
<dbReference type="GO" id="GO:0008821">
    <property type="term" value="F:crossover junction DNA endonuclease activity"/>
    <property type="evidence" value="ECO:0007669"/>
    <property type="project" value="UniProtKB-UniRule"/>
</dbReference>
<dbReference type="GO" id="GO:0003677">
    <property type="term" value="F:DNA binding"/>
    <property type="evidence" value="ECO:0007669"/>
    <property type="project" value="UniProtKB-KW"/>
</dbReference>
<dbReference type="GO" id="GO:0000287">
    <property type="term" value="F:magnesium ion binding"/>
    <property type="evidence" value="ECO:0007669"/>
    <property type="project" value="UniProtKB-UniRule"/>
</dbReference>
<dbReference type="GO" id="GO:0006310">
    <property type="term" value="P:DNA recombination"/>
    <property type="evidence" value="ECO:0007669"/>
    <property type="project" value="UniProtKB-UniRule"/>
</dbReference>
<dbReference type="GO" id="GO:0006281">
    <property type="term" value="P:DNA repair"/>
    <property type="evidence" value="ECO:0007669"/>
    <property type="project" value="UniProtKB-UniRule"/>
</dbReference>
<dbReference type="CDD" id="cd16962">
    <property type="entry name" value="RuvC"/>
    <property type="match status" value="1"/>
</dbReference>
<dbReference type="FunFam" id="3.30.420.10:FF:000002">
    <property type="entry name" value="Crossover junction endodeoxyribonuclease RuvC"/>
    <property type="match status" value="1"/>
</dbReference>
<dbReference type="Gene3D" id="3.30.420.10">
    <property type="entry name" value="Ribonuclease H-like superfamily/Ribonuclease H"/>
    <property type="match status" value="1"/>
</dbReference>
<dbReference type="HAMAP" id="MF_00034">
    <property type="entry name" value="RuvC"/>
    <property type="match status" value="1"/>
</dbReference>
<dbReference type="InterPro" id="IPR012337">
    <property type="entry name" value="RNaseH-like_sf"/>
</dbReference>
<dbReference type="InterPro" id="IPR036397">
    <property type="entry name" value="RNaseH_sf"/>
</dbReference>
<dbReference type="InterPro" id="IPR020563">
    <property type="entry name" value="X-over_junc_endoDNase_Mg_BS"/>
</dbReference>
<dbReference type="InterPro" id="IPR002176">
    <property type="entry name" value="X-over_junc_endoDNase_RuvC"/>
</dbReference>
<dbReference type="NCBIfam" id="NF000711">
    <property type="entry name" value="PRK00039.2-1"/>
    <property type="match status" value="1"/>
</dbReference>
<dbReference type="NCBIfam" id="TIGR00228">
    <property type="entry name" value="ruvC"/>
    <property type="match status" value="1"/>
</dbReference>
<dbReference type="PANTHER" id="PTHR30194">
    <property type="entry name" value="CROSSOVER JUNCTION ENDODEOXYRIBONUCLEASE RUVC"/>
    <property type="match status" value="1"/>
</dbReference>
<dbReference type="PANTHER" id="PTHR30194:SF3">
    <property type="entry name" value="CROSSOVER JUNCTION ENDODEOXYRIBONUCLEASE RUVC"/>
    <property type="match status" value="1"/>
</dbReference>
<dbReference type="Pfam" id="PF02075">
    <property type="entry name" value="RuvC"/>
    <property type="match status" value="1"/>
</dbReference>
<dbReference type="PRINTS" id="PR00696">
    <property type="entry name" value="RSOLVASERUVC"/>
</dbReference>
<dbReference type="SUPFAM" id="SSF53098">
    <property type="entry name" value="Ribonuclease H-like"/>
    <property type="match status" value="1"/>
</dbReference>
<dbReference type="PROSITE" id="PS01321">
    <property type="entry name" value="RUVC"/>
    <property type="match status" value="1"/>
</dbReference>
<reference key="1">
    <citation type="journal article" date="2011" name="J. Bacteriol.">
        <title>Comparative genomics of 28 Salmonella enterica isolates: evidence for CRISPR-mediated adaptive sublineage evolution.</title>
        <authorList>
            <person name="Fricke W.F."/>
            <person name="Mammel M.K."/>
            <person name="McDermott P.F."/>
            <person name="Tartera C."/>
            <person name="White D.G."/>
            <person name="Leclerc J.E."/>
            <person name="Ravel J."/>
            <person name="Cebula T.A."/>
        </authorList>
    </citation>
    <scope>NUCLEOTIDE SEQUENCE [LARGE SCALE GENOMIC DNA]</scope>
    <source>
        <strain>SL476</strain>
    </source>
</reference>
<organism>
    <name type="scientific">Salmonella heidelberg (strain SL476)</name>
    <dbReference type="NCBI Taxonomy" id="454169"/>
    <lineage>
        <taxon>Bacteria</taxon>
        <taxon>Pseudomonadati</taxon>
        <taxon>Pseudomonadota</taxon>
        <taxon>Gammaproteobacteria</taxon>
        <taxon>Enterobacterales</taxon>
        <taxon>Enterobacteriaceae</taxon>
        <taxon>Salmonella</taxon>
    </lineage>
</organism>
<evidence type="ECO:0000255" key="1">
    <source>
        <dbReference type="HAMAP-Rule" id="MF_00034"/>
    </source>
</evidence>
<protein>
    <recommendedName>
        <fullName evidence="1">Crossover junction endodeoxyribonuclease RuvC</fullName>
        <ecNumber evidence="1">3.1.21.10</ecNumber>
    </recommendedName>
    <alternativeName>
        <fullName evidence="1">Holliday junction nuclease RuvC</fullName>
    </alternativeName>
    <alternativeName>
        <fullName evidence="1">Holliday junction resolvase RuvC</fullName>
    </alternativeName>
</protein>
<keyword id="KW-0963">Cytoplasm</keyword>
<keyword id="KW-0227">DNA damage</keyword>
<keyword id="KW-0233">DNA recombination</keyword>
<keyword id="KW-0234">DNA repair</keyword>
<keyword id="KW-0238">DNA-binding</keyword>
<keyword id="KW-0255">Endonuclease</keyword>
<keyword id="KW-0378">Hydrolase</keyword>
<keyword id="KW-0460">Magnesium</keyword>
<keyword id="KW-0479">Metal-binding</keyword>
<keyword id="KW-0540">Nuclease</keyword>
<gene>
    <name evidence="1" type="primary">ruvC</name>
    <name type="ordered locus">SeHA_C2112</name>
</gene>
<name>RUVC_SALHS</name>